<comment type="function">
    <text evidence="7">Aerial growth, conidiation, and dispersal of filamentous fungi in the environment rely upon a capability of their secreting small amphipathic proteins called hydrophobins (HPBs) with low sequence identity. Class I can self-assemble into an outermost layer of rodlet bundles on aerial cell surfaces, conferring cellular hydrophobicity that supports fungal growth, development and dispersal; whereas Class II form highly ordered films at water-air interfaces through intermolecular interactions but contribute nothing to the rodlet structure.</text>
</comment>
<comment type="subunit">
    <text evidence="2">Homotetramer (By similarity). Further self-assembles to form highly ordered films at water-air interfaces through intermolecular interactions (By similarity).</text>
</comment>
<comment type="subcellular location">
    <subcellularLocation>
        <location evidence="8">Secreted</location>
        <location evidence="8">Cell wall</location>
    </subcellularLocation>
    <subcellularLocation>
        <location evidence="8">Secreted</location>
    </subcellularLocation>
</comment>
<comment type="domain">
    <text evidence="5">Contains four hydrophobin units with the same cysteine pattern CX9-CCX11-CX16-CX8-CCX10-C, which is a little different from HYD1 and HYD2, but corresponds to the consensus defined for the fungal class II hydrophobins.</text>
</comment>
<comment type="similarity">
    <text evidence="7">Belongs to the cerato-ulmin hydrophobin family.</text>
</comment>
<evidence type="ECO:0000250" key="1">
    <source>
        <dbReference type="UniProtKB" id="P16933"/>
    </source>
</evidence>
<evidence type="ECO:0000250" key="2">
    <source>
        <dbReference type="UniProtKB" id="P52754"/>
    </source>
</evidence>
<evidence type="ECO:0000255" key="3"/>
<evidence type="ECO:0000255" key="4">
    <source>
        <dbReference type="PROSITE-ProRule" id="PRU00498"/>
    </source>
</evidence>
<evidence type="ECO:0000269" key="5">
    <source>
    </source>
</evidence>
<evidence type="ECO:0000303" key="6">
    <source>
    </source>
</evidence>
<evidence type="ECO:0000305" key="7"/>
<evidence type="ECO:0000305" key="8">
    <source>
    </source>
</evidence>
<accession>A0A2H4S6M4</accession>
<organism>
    <name type="scientific">Cordyceps militaris</name>
    <name type="common">Caterpillar fungus</name>
    <name type="synonym">Clavaria militaris</name>
    <dbReference type="NCBI Taxonomy" id="73501"/>
    <lineage>
        <taxon>Eukaryota</taxon>
        <taxon>Fungi</taxon>
        <taxon>Dikarya</taxon>
        <taxon>Ascomycota</taxon>
        <taxon>Pezizomycotina</taxon>
        <taxon>Sordariomycetes</taxon>
        <taxon>Hypocreomycetidae</taxon>
        <taxon>Hypocreales</taxon>
        <taxon>Cordycipitaceae</taxon>
        <taxon>Cordyceps</taxon>
    </lineage>
</organism>
<reference key="1">
    <citation type="journal article" date="2017" name="BMC Genomics">
        <title>Chromosome level assembly and secondary metabolite potential of the parasitic fungus Cordyceps militaris.</title>
        <authorList>
            <person name="Kramer G.J."/>
            <person name="Nodwell J.R."/>
        </authorList>
    </citation>
    <scope>NUCLEOTIDE SEQUENCE [LARGE SCALE GENOMIC DNA]</scope>
    <source>
        <strain>ATCC 34164</strain>
    </source>
</reference>
<reference key="2">
    <citation type="journal article" date="2021" name="Int. J. Mol. Sci.">
        <title>Cysteine-Rich Hydrophobin Gene Family: Genome Wide Analysis, Phylogeny and Transcript Profiling in Cordyceps militaris.</title>
        <authorList>
            <person name="Li X."/>
            <person name="Wang F."/>
            <person name="Xu Y."/>
            <person name="Liu G."/>
            <person name="Dong C."/>
        </authorList>
    </citation>
    <scope>FUNCTION</scope>
    <scope>DOMAIN</scope>
</reference>
<name>QHYD_CORMI</name>
<protein>
    <recommendedName>
        <fullName evidence="6">Quadr-hydrophobin</fullName>
    </recommendedName>
</protein>
<sequence length="537" mass="50997">MKFITVAAALFASTSLAVPTNPNHGGSACVPNPHHGGSSTKSGPGGNPTGGNPTGSNTNTGPGGNPTGSNTSSSPGTRTTGGSTSSNPGPKPTSSNTRSGPATTTTGTKTGSNTSSGPATTSTGNPGPGGEFHCPRGLYSNLQCCATDVLGVVDLDCASPPTTPTSGDNFNAICAAVGKQAKCCVLPVAGQAALCQNPIGGNPPGGNPPGGNPPGGNPPGGNPPGGNPPGGPVCPSGLYSNAQCCATDVLGVADLNCDTPSKTPTSGADFTAICAASGQQAKCCVIPVAGQALLCENPTGGNPPGGNPPGGNPPGGNPPGGNPPGGNPPGGNPPGGNPTSSAPGSNPTNPPGGPVCPPGLYSNAQCCAVDVLGLADLDCDTPSQTPTSSADFRSICAADGQAAKCCVIPVAGQALLCQDPLGGNPPGGNPPGSSNPPGGSNPPGGSNPPGGSNPPGGNPPGGNPPGGNHVCPSGLYSNAQCCDVNVLGVANLNCAPPSTKPTSGKNFESICAAIGKGSMCCVVPLLGQAILCQRAII</sequence>
<dbReference type="EMBL" id="CP023322">
    <property type="protein sequence ID" value="ATY58761.1"/>
    <property type="molecule type" value="Genomic_DNA"/>
</dbReference>
<dbReference type="SMR" id="A0A2H4S6M4"/>
<dbReference type="VEuPathDB" id="FungiDB:A9K55_003394"/>
<dbReference type="OrthoDB" id="12822at474943"/>
<dbReference type="Proteomes" id="UP000323067">
    <property type="component" value="Chromosome iv"/>
</dbReference>
<dbReference type="GO" id="GO:0005576">
    <property type="term" value="C:extracellular region"/>
    <property type="evidence" value="ECO:0007669"/>
    <property type="project" value="UniProtKB-KW"/>
</dbReference>
<dbReference type="CDD" id="cd23508">
    <property type="entry name" value="hydrophobin_II"/>
    <property type="match status" value="4"/>
</dbReference>
<dbReference type="Gene3D" id="3.20.120.10">
    <property type="entry name" value="Hydrophobin"/>
    <property type="match status" value="4"/>
</dbReference>
<dbReference type="InterPro" id="IPR010636">
    <property type="entry name" value="Cerato-ulmin_hydrophobin"/>
</dbReference>
<dbReference type="InterPro" id="IPR036686">
    <property type="entry name" value="Hydrophobin_sf"/>
</dbReference>
<dbReference type="PANTHER" id="PTHR42341">
    <property type="entry name" value="HYDROPHOBIN"/>
    <property type="match status" value="1"/>
</dbReference>
<dbReference type="PANTHER" id="PTHR42341:SF2">
    <property type="entry name" value="HYDROPHOBIN"/>
    <property type="match status" value="1"/>
</dbReference>
<dbReference type="Pfam" id="PF06766">
    <property type="entry name" value="Hydrophobin_2"/>
    <property type="match status" value="4"/>
</dbReference>
<dbReference type="SUPFAM" id="SSF101751">
    <property type="entry name" value="Hydrophobin II, HfbII"/>
    <property type="match status" value="4"/>
</dbReference>
<dbReference type="PROSITE" id="PS51257">
    <property type="entry name" value="PROKAR_LIPOPROTEIN"/>
    <property type="match status" value="1"/>
</dbReference>
<keyword id="KW-0134">Cell wall</keyword>
<keyword id="KW-1015">Disulfide bond</keyword>
<keyword id="KW-0325">Glycoprotein</keyword>
<keyword id="KW-0677">Repeat</keyword>
<keyword id="KW-0964">Secreted</keyword>
<keyword id="KW-0732">Signal</keyword>
<feature type="signal peptide" evidence="3">
    <location>
        <begin position="1"/>
        <end position="17"/>
    </location>
</feature>
<feature type="chain" id="PRO_5014156482" description="Quadr-hydrophobin">
    <location>
        <begin position="18"/>
        <end position="537"/>
    </location>
</feature>
<feature type="region of interest" description="Hydrophobin 1" evidence="5">
    <location>
        <begin position="63"/>
        <end position="199"/>
    </location>
</feature>
<feature type="region of interest" description="Hydrophobin 2" evidence="5">
    <location>
        <begin position="200"/>
        <end position="299"/>
    </location>
</feature>
<feature type="region of interest" description="Hydrophobin 3" evidence="5">
    <location>
        <begin position="300"/>
        <end position="421"/>
    </location>
</feature>
<feature type="region of interest" description="Hydrophobin 4" evidence="5">
    <location>
        <begin position="422"/>
        <end position="537"/>
    </location>
</feature>
<feature type="glycosylation site" description="N-linked (GlcNAc...) asparagine" evidence="4">
    <location>
        <position position="70"/>
    </location>
</feature>
<feature type="glycosylation site" description="N-linked (GlcNAc...) asparagine" evidence="4">
    <location>
        <position position="113"/>
    </location>
</feature>
<feature type="disulfide bond" evidence="1">
    <location>
        <begin position="134"/>
        <end position="183"/>
    </location>
</feature>
<feature type="disulfide bond" evidence="1">
    <location>
        <begin position="144"/>
        <end position="174"/>
    </location>
</feature>
<feature type="disulfide bond" evidence="1">
    <location>
        <begin position="145"/>
        <end position="157"/>
    </location>
</feature>
<feature type="disulfide bond" evidence="1">
    <location>
        <begin position="184"/>
        <end position="195"/>
    </location>
</feature>
<feature type="disulfide bond" evidence="1">
    <location>
        <begin position="234"/>
        <end position="283"/>
    </location>
</feature>
<feature type="disulfide bond" evidence="1">
    <location>
        <begin position="244"/>
        <end position="274"/>
    </location>
</feature>
<feature type="disulfide bond" evidence="1">
    <location>
        <begin position="245"/>
        <end position="257"/>
    </location>
</feature>
<feature type="disulfide bond" evidence="1">
    <location>
        <begin position="284"/>
        <end position="295"/>
    </location>
</feature>
<feature type="disulfide bond" evidence="1">
    <location>
        <begin position="356"/>
        <end position="405"/>
    </location>
</feature>
<feature type="disulfide bond" evidence="1">
    <location>
        <begin position="366"/>
        <end position="396"/>
    </location>
</feature>
<feature type="disulfide bond" evidence="1">
    <location>
        <begin position="367"/>
        <end position="379"/>
    </location>
</feature>
<feature type="disulfide bond" evidence="1">
    <location>
        <begin position="406"/>
        <end position="417"/>
    </location>
</feature>
<feature type="disulfide bond" evidence="1">
    <location>
        <begin position="471"/>
        <end position="520"/>
    </location>
</feature>
<feature type="disulfide bond" evidence="1">
    <location>
        <begin position="481"/>
        <end position="511"/>
    </location>
</feature>
<feature type="disulfide bond" evidence="1">
    <location>
        <begin position="482"/>
        <end position="494"/>
    </location>
</feature>
<feature type="disulfide bond" evidence="1">
    <location>
        <begin position="521"/>
        <end position="532"/>
    </location>
</feature>
<gene>
    <name evidence="6" type="primary">QHYD</name>
    <name type="ORF">A9K55_003394</name>
</gene>
<proteinExistence type="inferred from homology"/>